<evidence type="ECO:0000255" key="1">
    <source>
        <dbReference type="HAMAP-Rule" id="MF_00013"/>
    </source>
</evidence>
<evidence type="ECO:0000255" key="2">
    <source>
        <dbReference type="PROSITE-ProRule" id="PRU01067"/>
    </source>
</evidence>
<proteinExistence type="inferred from homology"/>
<name>LIPB_NEIM0</name>
<gene>
    <name evidence="1" type="primary">lipB</name>
    <name type="ordered locus">NMCC_1096</name>
</gene>
<organism>
    <name type="scientific">Neisseria meningitidis serogroup C (strain 053442)</name>
    <dbReference type="NCBI Taxonomy" id="374833"/>
    <lineage>
        <taxon>Bacteria</taxon>
        <taxon>Pseudomonadati</taxon>
        <taxon>Pseudomonadota</taxon>
        <taxon>Betaproteobacteria</taxon>
        <taxon>Neisseriales</taxon>
        <taxon>Neisseriaceae</taxon>
        <taxon>Neisseria</taxon>
    </lineage>
</organism>
<protein>
    <recommendedName>
        <fullName evidence="1">Octanoyltransferase</fullName>
        <ecNumber evidence="1">2.3.1.181</ecNumber>
    </recommendedName>
    <alternativeName>
        <fullName evidence="1">Lipoate-protein ligase B</fullName>
    </alternativeName>
    <alternativeName>
        <fullName evidence="1">Lipoyl/octanoyl transferase</fullName>
    </alternativeName>
    <alternativeName>
        <fullName evidence="1">Octanoyl-[acyl-carrier-protein]-protein N-octanoyltransferase</fullName>
    </alternativeName>
</protein>
<sequence length="207" mass="22841">MKIIHKGLVEYLPTFEAMKTFNAGRNADTEDELWVVEHPPVFTQGLAGKPEHLLIRDDIPVVQIDRGGQITYHGPGQLVVYTMIDFKRRKTSVRNIVSALENSIIATLAEYGIEAAADPKRPGVYVGERKIASLGLRIKNGSVYHGLALNVNMDLSPFTHINPCGYAGMEMTQIADFVQPCPTPDEVAAKLTAHLETQFTPKADNNE</sequence>
<comment type="function">
    <text evidence="1">Catalyzes the transfer of endogenously produced octanoic acid from octanoyl-acyl-carrier-protein onto the lipoyl domains of lipoate-dependent enzymes. Lipoyl-ACP can also act as a substrate although octanoyl-ACP is likely to be the physiological substrate.</text>
</comment>
<comment type="catalytic activity">
    <reaction evidence="1">
        <text>octanoyl-[ACP] + L-lysyl-[protein] = N(6)-octanoyl-L-lysyl-[protein] + holo-[ACP] + H(+)</text>
        <dbReference type="Rhea" id="RHEA:17665"/>
        <dbReference type="Rhea" id="RHEA-COMP:9636"/>
        <dbReference type="Rhea" id="RHEA-COMP:9685"/>
        <dbReference type="Rhea" id="RHEA-COMP:9752"/>
        <dbReference type="Rhea" id="RHEA-COMP:9928"/>
        <dbReference type="ChEBI" id="CHEBI:15378"/>
        <dbReference type="ChEBI" id="CHEBI:29969"/>
        <dbReference type="ChEBI" id="CHEBI:64479"/>
        <dbReference type="ChEBI" id="CHEBI:78463"/>
        <dbReference type="ChEBI" id="CHEBI:78809"/>
        <dbReference type="EC" id="2.3.1.181"/>
    </reaction>
</comment>
<comment type="pathway">
    <text evidence="1">Protein modification; protein lipoylation via endogenous pathway; protein N(6)-(lipoyl)lysine from octanoyl-[acyl-carrier-protein]: step 1/2.</text>
</comment>
<comment type="subcellular location">
    <subcellularLocation>
        <location evidence="1">Cytoplasm</location>
    </subcellularLocation>
</comment>
<comment type="miscellaneous">
    <text evidence="1">In the reaction, the free carboxyl group of octanoic acid is attached via an amide linkage to the epsilon-amino group of a specific lysine residue of lipoyl domains of lipoate-dependent enzymes.</text>
</comment>
<comment type="similarity">
    <text evidence="1">Belongs to the LipB family.</text>
</comment>
<feature type="chain" id="PRO_1000074007" description="Octanoyltransferase">
    <location>
        <begin position="1"/>
        <end position="207"/>
    </location>
</feature>
<feature type="domain" description="BPL/LPL catalytic" evidence="2">
    <location>
        <begin position="27"/>
        <end position="203"/>
    </location>
</feature>
<feature type="active site" description="Acyl-thioester intermediate" evidence="1">
    <location>
        <position position="164"/>
    </location>
</feature>
<feature type="binding site" evidence="1">
    <location>
        <begin position="66"/>
        <end position="73"/>
    </location>
    <ligand>
        <name>substrate</name>
    </ligand>
</feature>
<feature type="binding site" evidence="1">
    <location>
        <begin position="133"/>
        <end position="135"/>
    </location>
    <ligand>
        <name>substrate</name>
    </ligand>
</feature>
<feature type="binding site" evidence="1">
    <location>
        <begin position="146"/>
        <end position="148"/>
    </location>
    <ligand>
        <name>substrate</name>
    </ligand>
</feature>
<feature type="site" description="Lowers pKa of active site Cys" evidence="1">
    <location>
        <position position="130"/>
    </location>
</feature>
<keyword id="KW-0012">Acyltransferase</keyword>
<keyword id="KW-0963">Cytoplasm</keyword>
<keyword id="KW-0808">Transferase</keyword>
<reference key="1">
    <citation type="journal article" date="2008" name="Genomics">
        <title>Characterization of ST-4821 complex, a unique Neisseria meningitidis clone.</title>
        <authorList>
            <person name="Peng J."/>
            <person name="Yang L."/>
            <person name="Yang F."/>
            <person name="Yang J."/>
            <person name="Yan Y."/>
            <person name="Nie H."/>
            <person name="Zhang X."/>
            <person name="Xiong Z."/>
            <person name="Jiang Y."/>
            <person name="Cheng F."/>
            <person name="Xu X."/>
            <person name="Chen S."/>
            <person name="Sun L."/>
            <person name="Li W."/>
            <person name="Shen Y."/>
            <person name="Shao Z."/>
            <person name="Liang X."/>
            <person name="Xu J."/>
            <person name="Jin Q."/>
        </authorList>
    </citation>
    <scope>NUCLEOTIDE SEQUENCE [LARGE SCALE GENOMIC DNA]</scope>
    <source>
        <strain>053442</strain>
    </source>
</reference>
<dbReference type="EC" id="2.3.1.181" evidence="1"/>
<dbReference type="EMBL" id="CP000381">
    <property type="protein sequence ID" value="ABX73273.1"/>
    <property type="molecule type" value="Genomic_DNA"/>
</dbReference>
<dbReference type="RefSeq" id="WP_002217173.1">
    <property type="nucleotide sequence ID" value="NC_010120.1"/>
</dbReference>
<dbReference type="SMR" id="A9LZ96"/>
<dbReference type="KEGG" id="nmn:NMCC_1096"/>
<dbReference type="HOGENOM" id="CLU_035168_3_1_4"/>
<dbReference type="UniPathway" id="UPA00538">
    <property type="reaction ID" value="UER00592"/>
</dbReference>
<dbReference type="Proteomes" id="UP000001177">
    <property type="component" value="Chromosome"/>
</dbReference>
<dbReference type="GO" id="GO:0005737">
    <property type="term" value="C:cytoplasm"/>
    <property type="evidence" value="ECO:0007669"/>
    <property type="project" value="UniProtKB-SubCell"/>
</dbReference>
<dbReference type="GO" id="GO:0033819">
    <property type="term" value="F:lipoyl(octanoyl) transferase activity"/>
    <property type="evidence" value="ECO:0007669"/>
    <property type="project" value="UniProtKB-EC"/>
</dbReference>
<dbReference type="GO" id="GO:0036211">
    <property type="term" value="P:protein modification process"/>
    <property type="evidence" value="ECO:0007669"/>
    <property type="project" value="InterPro"/>
</dbReference>
<dbReference type="CDD" id="cd16444">
    <property type="entry name" value="LipB"/>
    <property type="match status" value="1"/>
</dbReference>
<dbReference type="FunFam" id="3.30.930.10:FF:000020">
    <property type="entry name" value="Octanoyltransferase"/>
    <property type="match status" value="1"/>
</dbReference>
<dbReference type="Gene3D" id="3.30.930.10">
    <property type="entry name" value="Bira Bifunctional Protein, Domain 2"/>
    <property type="match status" value="1"/>
</dbReference>
<dbReference type="HAMAP" id="MF_00013">
    <property type="entry name" value="LipB"/>
    <property type="match status" value="1"/>
</dbReference>
<dbReference type="InterPro" id="IPR045864">
    <property type="entry name" value="aa-tRNA-synth_II/BPL/LPL"/>
</dbReference>
<dbReference type="InterPro" id="IPR004143">
    <property type="entry name" value="BPL_LPL_catalytic"/>
</dbReference>
<dbReference type="InterPro" id="IPR000544">
    <property type="entry name" value="Octanoyltransferase"/>
</dbReference>
<dbReference type="InterPro" id="IPR020605">
    <property type="entry name" value="Octanoyltransferase_CS"/>
</dbReference>
<dbReference type="NCBIfam" id="TIGR00214">
    <property type="entry name" value="lipB"/>
    <property type="match status" value="1"/>
</dbReference>
<dbReference type="NCBIfam" id="NF010922">
    <property type="entry name" value="PRK14342.1"/>
    <property type="match status" value="1"/>
</dbReference>
<dbReference type="PANTHER" id="PTHR10993:SF7">
    <property type="entry name" value="LIPOYLTRANSFERASE 2, MITOCHONDRIAL-RELATED"/>
    <property type="match status" value="1"/>
</dbReference>
<dbReference type="PANTHER" id="PTHR10993">
    <property type="entry name" value="OCTANOYLTRANSFERASE"/>
    <property type="match status" value="1"/>
</dbReference>
<dbReference type="Pfam" id="PF21948">
    <property type="entry name" value="LplA-B_cat"/>
    <property type="match status" value="1"/>
</dbReference>
<dbReference type="PIRSF" id="PIRSF016262">
    <property type="entry name" value="LPLase"/>
    <property type="match status" value="1"/>
</dbReference>
<dbReference type="SUPFAM" id="SSF55681">
    <property type="entry name" value="Class II aaRS and biotin synthetases"/>
    <property type="match status" value="1"/>
</dbReference>
<dbReference type="PROSITE" id="PS51733">
    <property type="entry name" value="BPL_LPL_CATALYTIC"/>
    <property type="match status" value="1"/>
</dbReference>
<dbReference type="PROSITE" id="PS01313">
    <property type="entry name" value="LIPB"/>
    <property type="match status" value="1"/>
</dbReference>
<accession>A9LZ96</accession>